<proteinExistence type="inferred from homology"/>
<gene>
    <name evidence="1" type="primary">oppD</name>
    <name type="ordered locus">BQ2027_MB1312C</name>
</gene>
<keyword id="KW-0004">4Fe-4S</keyword>
<keyword id="KW-0067">ATP-binding</keyword>
<keyword id="KW-0997">Cell inner membrane</keyword>
<keyword id="KW-1003">Cell membrane</keyword>
<keyword id="KW-0408">Iron</keyword>
<keyword id="KW-0411">Iron-sulfur</keyword>
<keyword id="KW-0472">Membrane</keyword>
<keyword id="KW-0479">Metal-binding</keyword>
<keyword id="KW-0547">Nucleotide-binding</keyword>
<keyword id="KW-0571">Peptide transport</keyword>
<keyword id="KW-0653">Protein transport</keyword>
<keyword id="KW-1185">Reference proteome</keyword>
<keyword id="KW-0677">Repeat</keyword>
<keyword id="KW-1278">Translocase</keyword>
<keyword id="KW-0813">Transport</keyword>
<name>OPPD_MYCBO</name>
<protein>
    <recommendedName>
        <fullName evidence="1">Oligopeptide transport ATP-binding protein OppD</fullName>
        <ecNumber evidence="1">7.4.2.6</ecNumber>
    </recommendedName>
</protein>
<feature type="chain" id="PRO_0000093260" description="Oligopeptide transport ATP-binding protein OppD">
    <location>
        <begin position="1"/>
        <end position="612"/>
    </location>
</feature>
<feature type="domain" description="ABC transporter 1" evidence="2">
    <location>
        <begin position="5"/>
        <end position="255"/>
    </location>
</feature>
<feature type="domain" description="ABC transporter 2" evidence="2">
    <location>
        <begin position="350"/>
        <end position="600"/>
    </location>
</feature>
<feature type="binding site" evidence="1">
    <location>
        <position position="43"/>
    </location>
    <ligand>
        <name>ATP</name>
        <dbReference type="ChEBI" id="CHEBI:30616"/>
        <label>1</label>
    </ligand>
</feature>
<feature type="binding site" evidence="1">
    <location>
        <position position="44"/>
    </location>
    <ligand>
        <name>ATP</name>
        <dbReference type="ChEBI" id="CHEBI:30616"/>
        <label>1</label>
    </ligand>
</feature>
<feature type="binding site" evidence="1">
    <location>
        <position position="45"/>
    </location>
    <ligand>
        <name>ATP</name>
        <dbReference type="ChEBI" id="CHEBI:30616"/>
        <label>1</label>
    </ligand>
</feature>
<feature type="binding site" evidence="1">
    <location>
        <position position="46"/>
    </location>
    <ligand>
        <name>ATP</name>
        <dbReference type="ChEBI" id="CHEBI:30616"/>
        <label>1</label>
    </ligand>
</feature>
<feature type="binding site" evidence="1">
    <location>
        <position position="47"/>
    </location>
    <ligand>
        <name>ATP</name>
        <dbReference type="ChEBI" id="CHEBI:30616"/>
        <label>1</label>
    </ligand>
</feature>
<feature type="binding site" evidence="1">
    <location>
        <position position="48"/>
    </location>
    <ligand>
        <name>ATP</name>
        <dbReference type="ChEBI" id="CHEBI:30616"/>
        <label>1</label>
    </ligand>
</feature>
<feature type="binding site" evidence="1">
    <location>
        <position position="49"/>
    </location>
    <ligand>
        <name>ATP</name>
        <dbReference type="ChEBI" id="CHEBI:30616"/>
        <label>1</label>
    </ligand>
</feature>
<feature type="binding site" evidence="1">
    <location>
        <position position="61"/>
    </location>
    <ligand>
        <name>ATP</name>
        <dbReference type="ChEBI" id="CHEBI:30616"/>
        <label>1</label>
    </ligand>
</feature>
<feature type="binding site" evidence="1">
    <location>
        <position position="96"/>
    </location>
    <ligand>
        <name>ATP</name>
        <dbReference type="ChEBI" id="CHEBI:30616"/>
        <label>1</label>
    </ligand>
</feature>
<feature type="binding site" evidence="1">
    <location>
        <position position="147"/>
    </location>
    <ligand>
        <name>ATP</name>
        <dbReference type="ChEBI" id="CHEBI:30616"/>
        <label>2</label>
    </ligand>
</feature>
<feature type="binding site" evidence="1">
    <location>
        <position position="158"/>
    </location>
    <ligand>
        <name>ATP</name>
        <dbReference type="ChEBI" id="CHEBI:30616"/>
        <label>2</label>
    </ligand>
</feature>
<feature type="binding site" evidence="1">
    <location>
        <position position="159"/>
    </location>
    <ligand>
        <name>ATP</name>
        <dbReference type="ChEBI" id="CHEBI:30616"/>
        <label>2</label>
    </ligand>
</feature>
<feature type="binding site" evidence="1">
    <location>
        <position position="213"/>
    </location>
    <ligand>
        <name>ATP</name>
        <dbReference type="ChEBI" id="CHEBI:30616"/>
        <label>1</label>
    </ligand>
</feature>
<feature type="binding site" evidence="1">
    <location>
        <position position="286"/>
    </location>
    <ligand>
        <name>[4Fe-4S] cluster</name>
        <dbReference type="ChEBI" id="CHEBI:49883"/>
    </ligand>
</feature>
<feature type="binding site" evidence="1">
    <location>
        <position position="292"/>
    </location>
    <ligand>
        <name>[4Fe-4S] cluster</name>
        <dbReference type="ChEBI" id="CHEBI:49883"/>
    </ligand>
</feature>
<feature type="binding site" evidence="1">
    <location>
        <position position="299"/>
    </location>
    <ligand>
        <name>[4Fe-4S] cluster</name>
        <dbReference type="ChEBI" id="CHEBI:49883"/>
    </ligand>
</feature>
<feature type="binding site" evidence="1">
    <location>
        <position position="317"/>
    </location>
    <ligand>
        <name>[4Fe-4S] cluster</name>
        <dbReference type="ChEBI" id="CHEBI:49883"/>
    </ligand>
</feature>
<feature type="binding site" evidence="1">
    <location>
        <position position="396"/>
    </location>
    <ligand>
        <name>ATP</name>
        <dbReference type="ChEBI" id="CHEBI:30616"/>
        <label>2</label>
    </ligand>
</feature>
<feature type="binding site" evidence="1">
    <location>
        <position position="397"/>
    </location>
    <ligand>
        <name>ATP</name>
        <dbReference type="ChEBI" id="CHEBI:30616"/>
        <label>2</label>
    </ligand>
</feature>
<feature type="binding site" evidence="1">
    <location>
        <position position="398"/>
    </location>
    <ligand>
        <name>ATP</name>
        <dbReference type="ChEBI" id="CHEBI:30616"/>
        <label>2</label>
    </ligand>
</feature>
<feature type="binding site" evidence="1">
    <location>
        <position position="399"/>
    </location>
    <ligand>
        <name>ATP</name>
        <dbReference type="ChEBI" id="CHEBI:30616"/>
        <label>2</label>
    </ligand>
</feature>
<feature type="binding site" evidence="1">
    <location>
        <position position="400"/>
    </location>
    <ligand>
        <name>ATP</name>
        <dbReference type="ChEBI" id="CHEBI:30616"/>
        <label>2</label>
    </ligand>
</feature>
<feature type="binding site" evidence="1">
    <location>
        <position position="401"/>
    </location>
    <ligand>
        <name>ATP</name>
        <dbReference type="ChEBI" id="CHEBI:30616"/>
        <label>2</label>
    </ligand>
</feature>
<feature type="binding site" evidence="1">
    <location>
        <position position="402"/>
    </location>
    <ligand>
        <name>ATP</name>
        <dbReference type="ChEBI" id="CHEBI:30616"/>
        <label>2</label>
    </ligand>
</feature>
<feature type="binding site" evidence="1">
    <location>
        <position position="445"/>
    </location>
    <ligand>
        <name>ATP</name>
        <dbReference type="ChEBI" id="CHEBI:30616"/>
        <label>2</label>
    </ligand>
</feature>
<feature type="binding site" evidence="1">
    <location>
        <position position="495"/>
    </location>
    <ligand>
        <name>ATP</name>
        <dbReference type="ChEBI" id="CHEBI:30616"/>
        <label>1</label>
    </ligand>
</feature>
<feature type="binding site" evidence="1">
    <location>
        <position position="499"/>
    </location>
    <ligand>
        <name>ATP</name>
        <dbReference type="ChEBI" id="CHEBI:30616"/>
        <label>1</label>
    </ligand>
</feature>
<feature type="binding site" evidence="1">
    <location>
        <position position="503"/>
    </location>
    <ligand>
        <name>ATP</name>
        <dbReference type="ChEBI" id="CHEBI:30616"/>
        <label>1</label>
    </ligand>
</feature>
<feature type="binding site" evidence="1">
    <location>
        <position position="558"/>
    </location>
    <ligand>
        <name>ATP</name>
        <dbReference type="ChEBI" id="CHEBI:30616"/>
        <label>2</label>
    </ligand>
</feature>
<dbReference type="EC" id="7.4.2.6" evidence="1"/>
<dbReference type="EMBL" id="LT708304">
    <property type="protein sequence ID" value="SIT99915.1"/>
    <property type="molecule type" value="Genomic_DNA"/>
</dbReference>
<dbReference type="RefSeq" id="NP_854966.1">
    <property type="nucleotide sequence ID" value="NC_002945.3"/>
</dbReference>
<dbReference type="RefSeq" id="WP_003406602.1">
    <property type="nucleotide sequence ID" value="NC_002945.4"/>
</dbReference>
<dbReference type="SMR" id="P63396"/>
<dbReference type="KEGG" id="mbo:BQ2027_MB1312C"/>
<dbReference type="PATRIC" id="fig|233413.5.peg.1437"/>
<dbReference type="Proteomes" id="UP000001419">
    <property type="component" value="Chromosome"/>
</dbReference>
<dbReference type="GO" id="GO:0005886">
    <property type="term" value="C:plasma membrane"/>
    <property type="evidence" value="ECO:0007669"/>
    <property type="project" value="UniProtKB-SubCell"/>
</dbReference>
<dbReference type="GO" id="GO:0005524">
    <property type="term" value="F:ATP binding"/>
    <property type="evidence" value="ECO:0007669"/>
    <property type="project" value="UniProtKB-KW"/>
</dbReference>
<dbReference type="GO" id="GO:0016887">
    <property type="term" value="F:ATP hydrolysis activity"/>
    <property type="evidence" value="ECO:0007669"/>
    <property type="project" value="InterPro"/>
</dbReference>
<dbReference type="GO" id="GO:0015833">
    <property type="term" value="P:peptide transport"/>
    <property type="evidence" value="ECO:0007669"/>
    <property type="project" value="InterPro"/>
</dbReference>
<dbReference type="CDD" id="cd03257">
    <property type="entry name" value="ABC_NikE_OppD_transporters"/>
    <property type="match status" value="2"/>
</dbReference>
<dbReference type="FunFam" id="3.40.50.300:FF:001383">
    <property type="entry name" value="Peptide ABC transporter ATP-binding protein"/>
    <property type="match status" value="1"/>
</dbReference>
<dbReference type="FunFam" id="3.40.50.300:FF:001659">
    <property type="entry name" value="Peptide ABC transporter ATP-binding protein"/>
    <property type="match status" value="1"/>
</dbReference>
<dbReference type="Gene3D" id="3.40.50.300">
    <property type="entry name" value="P-loop containing nucleotide triphosphate hydrolases"/>
    <property type="match status" value="2"/>
</dbReference>
<dbReference type="InterPro" id="IPR003593">
    <property type="entry name" value="AAA+_ATPase"/>
</dbReference>
<dbReference type="InterPro" id="IPR050388">
    <property type="entry name" value="ABC_Ni/Peptide_Import"/>
</dbReference>
<dbReference type="InterPro" id="IPR003439">
    <property type="entry name" value="ABC_transporter-like_ATP-bd"/>
</dbReference>
<dbReference type="InterPro" id="IPR017871">
    <property type="entry name" value="ABC_transporter-like_CS"/>
</dbReference>
<dbReference type="InterPro" id="IPR013563">
    <property type="entry name" value="Oligopep_ABC_C"/>
</dbReference>
<dbReference type="InterPro" id="IPR027417">
    <property type="entry name" value="P-loop_NTPase"/>
</dbReference>
<dbReference type="NCBIfam" id="TIGR01727">
    <property type="entry name" value="oligo_HPY"/>
    <property type="match status" value="1"/>
</dbReference>
<dbReference type="NCBIfam" id="NF007739">
    <property type="entry name" value="PRK10419.1"/>
    <property type="match status" value="2"/>
</dbReference>
<dbReference type="NCBIfam" id="NF008453">
    <property type="entry name" value="PRK11308.1"/>
    <property type="match status" value="2"/>
</dbReference>
<dbReference type="PANTHER" id="PTHR43297:SF2">
    <property type="entry name" value="DIPEPTIDE TRANSPORT ATP-BINDING PROTEIN DPPD"/>
    <property type="match status" value="1"/>
</dbReference>
<dbReference type="PANTHER" id="PTHR43297">
    <property type="entry name" value="OLIGOPEPTIDE TRANSPORT ATP-BINDING PROTEIN APPD"/>
    <property type="match status" value="1"/>
</dbReference>
<dbReference type="Pfam" id="PF00005">
    <property type="entry name" value="ABC_tran"/>
    <property type="match status" value="2"/>
</dbReference>
<dbReference type="Pfam" id="PF08352">
    <property type="entry name" value="oligo_HPY"/>
    <property type="match status" value="2"/>
</dbReference>
<dbReference type="SMART" id="SM00382">
    <property type="entry name" value="AAA"/>
    <property type="match status" value="2"/>
</dbReference>
<dbReference type="SUPFAM" id="SSF52540">
    <property type="entry name" value="P-loop containing nucleoside triphosphate hydrolases"/>
    <property type="match status" value="2"/>
</dbReference>
<dbReference type="PROSITE" id="PS00211">
    <property type="entry name" value="ABC_TRANSPORTER_1"/>
    <property type="match status" value="2"/>
</dbReference>
<dbReference type="PROSITE" id="PS50893">
    <property type="entry name" value="ABC_TRANSPORTER_2"/>
    <property type="match status" value="2"/>
</dbReference>
<reference key="1">
    <citation type="journal article" date="2003" name="Proc. Natl. Acad. Sci. U.S.A.">
        <title>The complete genome sequence of Mycobacterium bovis.</title>
        <authorList>
            <person name="Garnier T."/>
            <person name="Eiglmeier K."/>
            <person name="Camus J.-C."/>
            <person name="Medina N."/>
            <person name="Mansoor H."/>
            <person name="Pryor M."/>
            <person name="Duthoy S."/>
            <person name="Grondin S."/>
            <person name="Lacroix C."/>
            <person name="Monsempe C."/>
            <person name="Simon S."/>
            <person name="Harris B."/>
            <person name="Atkin R."/>
            <person name="Doggett J."/>
            <person name="Mayes R."/>
            <person name="Keating L."/>
            <person name="Wheeler P.R."/>
            <person name="Parkhill J."/>
            <person name="Barrell B.G."/>
            <person name="Cole S.T."/>
            <person name="Gordon S.V."/>
            <person name="Hewinson R.G."/>
        </authorList>
    </citation>
    <scope>NUCLEOTIDE SEQUENCE [LARGE SCALE GENOMIC DNA]</scope>
    <source>
        <strain>ATCC BAA-935 / AF2122/97</strain>
    </source>
</reference>
<reference key="2">
    <citation type="journal article" date="2017" name="Genome Announc.">
        <title>Updated reference genome sequence and annotation of Mycobacterium bovis AF2122/97.</title>
        <authorList>
            <person name="Malone K.M."/>
            <person name="Farrell D."/>
            <person name="Stuber T.P."/>
            <person name="Schubert O.T."/>
            <person name="Aebersold R."/>
            <person name="Robbe-Austerman S."/>
            <person name="Gordon S.V."/>
        </authorList>
    </citation>
    <scope>NUCLEOTIDE SEQUENCE [LARGE SCALE GENOMIC DNA]</scope>
    <scope>GENOME REANNOTATION</scope>
    <source>
        <strain>ATCC BAA-935 / AF2122/97</strain>
    </source>
</reference>
<accession>P63396</accession>
<accession>A0A1R3XY84</accession>
<accession>Q11040</accession>
<accession>X2BHC0</accession>
<organism>
    <name type="scientific">Mycobacterium bovis (strain ATCC BAA-935 / AF2122/97)</name>
    <dbReference type="NCBI Taxonomy" id="233413"/>
    <lineage>
        <taxon>Bacteria</taxon>
        <taxon>Bacillati</taxon>
        <taxon>Actinomycetota</taxon>
        <taxon>Actinomycetes</taxon>
        <taxon>Mycobacteriales</taxon>
        <taxon>Mycobacteriaceae</taxon>
        <taxon>Mycobacterium</taxon>
        <taxon>Mycobacterium tuberculosis complex</taxon>
    </lineage>
</organism>
<evidence type="ECO:0000250" key="1">
    <source>
        <dbReference type="UniProtKB" id="P9WQJ5"/>
    </source>
</evidence>
<evidence type="ECO:0000255" key="2">
    <source>
        <dbReference type="PROSITE-ProRule" id="PRU00434"/>
    </source>
</evidence>
<evidence type="ECO:0000305" key="3"/>
<sequence>MSPLLEVTDLAVTFRTDGDPVTAVRGISYRVEPGEVVAMVGESGSGKSAAAMAVVGLLPEYAQVRGSVRLQGTELLGLADNAMSRFRGKAIGTVFQDPMSALTPVYTVGDQIAEAIEVHQPRVGKKAARRRAVELLDLVGISQPQRRSRAFPHELSGGERQRVVIAIAIANDPDLLICDEPTTALDVTVQAQILDVLKAARDVTGAGVLIITHDLGVVAEFADRALVMYAGRVVESAGVNDLYRDRRMPYTVGLLGSVPRLDAAQGTRLVPIPGAPPSLAGLAPGCPFAPRCPLVIDECLTAEPELLDVATDHRAACIRTELVTGRSAADIYRVKTEARPAALGDASVVVRVRHLVKTYRLAKGVVLRRAIGEVRAVDGISLELRQGRTLGIVGESGSGKSTTLHEILELAAPQSGSIEVLGTDVATLGTAERRSLRRDIQVVFQDPVASLDPRLPVFDLIAEPLQANGFGKNETHARVAELLDIVGLRHGDASRYPAEFSGGQKQRIGIARALALQPKILALDEPVSALDVSIQAGIINLLLDLQEQFGLSYLFVSHDLSVVKHLAHQVAVMLAGTVVEQGDSEEVFGNPKHEYTRRLLGAVPQPDPARRG</sequence>
<comment type="function">
    <text evidence="1">Part of the ABC transporter complex OppABCD involved in the uptake of oligopeptides (By similarity). Responsible for energy coupling to the transport system (By similarity).</text>
</comment>
<comment type="catalytic activity">
    <reaction evidence="1">
        <text>a [peptide](out) + ATP + H2O = a [peptide](in) + ADP + phosphate + H(+)</text>
        <dbReference type="Rhea" id="RHEA:78459"/>
        <dbReference type="Rhea" id="RHEA-COMP:19083"/>
        <dbReference type="ChEBI" id="CHEBI:15377"/>
        <dbReference type="ChEBI" id="CHEBI:15378"/>
        <dbReference type="ChEBI" id="CHEBI:30616"/>
        <dbReference type="ChEBI" id="CHEBI:33710"/>
        <dbReference type="ChEBI" id="CHEBI:43474"/>
        <dbReference type="ChEBI" id="CHEBI:456216"/>
        <dbReference type="EC" id="7.4.2.6"/>
    </reaction>
    <physiologicalReaction direction="left-to-right" evidence="1">
        <dbReference type="Rhea" id="RHEA:78460"/>
    </physiologicalReaction>
</comment>
<comment type="subunit">
    <text evidence="1">The complex is composed of an ATP-binding protein (OppD), two transmembrane proteins (OppB and OppC) and a solute-binding protein (OppA).</text>
</comment>
<comment type="subcellular location">
    <subcellularLocation>
        <location evidence="1">Cell inner membrane</location>
        <topology evidence="1">Peripheral membrane protein</topology>
        <orientation evidence="1">Cytoplasmic side</orientation>
    </subcellularLocation>
    <text evidence="1">Attached to the internal side of the transmembrane subunits OppB and OppC.</text>
</comment>
<comment type="similarity">
    <text evidence="3">Belongs to the ABC transporter superfamily.</text>
</comment>